<protein>
    <recommendedName>
        <fullName>Lysozyme</fullName>
        <ecNumber>3.2.1.17</ecNumber>
    </recommendedName>
    <alternativeName>
        <fullName>1,4-beta-N-acetylmuramidase</fullName>
    </alternativeName>
</protein>
<organism>
    <name type="scientific">Estigmene acrea</name>
    <name type="common">Salt marsh moth</name>
    <name type="synonym">Phalaena acrea</name>
    <dbReference type="NCBI Taxonomy" id="56594"/>
    <lineage>
        <taxon>Eukaryota</taxon>
        <taxon>Metazoa</taxon>
        <taxon>Ecdysozoa</taxon>
        <taxon>Arthropoda</taxon>
        <taxon>Hexapoda</taxon>
        <taxon>Insecta</taxon>
        <taxon>Pterygota</taxon>
        <taxon>Neoptera</taxon>
        <taxon>Endopterygota</taxon>
        <taxon>Lepidoptera</taxon>
        <taxon>Glossata</taxon>
        <taxon>Ditrysia</taxon>
        <taxon>Noctuoidea</taxon>
        <taxon>Erebidae</taxon>
        <taxon>Arctiinae</taxon>
        <taxon>Estigmene</taxon>
    </lineage>
</organism>
<dbReference type="EC" id="3.2.1.17"/>
<dbReference type="GO" id="GO:0003796">
    <property type="term" value="F:lysozyme activity"/>
    <property type="evidence" value="ECO:0007669"/>
    <property type="project" value="UniProtKB-EC"/>
</dbReference>
<dbReference type="GO" id="GO:0042742">
    <property type="term" value="P:defense response to bacterium"/>
    <property type="evidence" value="ECO:0007669"/>
    <property type="project" value="UniProtKB-KW"/>
</dbReference>
<dbReference type="GO" id="GO:0031640">
    <property type="term" value="P:killing of cells of another organism"/>
    <property type="evidence" value="ECO:0007669"/>
    <property type="project" value="UniProtKB-KW"/>
</dbReference>
<keyword id="KW-0929">Antimicrobial</keyword>
<keyword id="KW-0081">Bacteriolytic enzyme</keyword>
<keyword id="KW-0903">Direct protein sequencing</keyword>
<keyword id="KW-0326">Glycosidase</keyword>
<keyword id="KW-0378">Hydrolase</keyword>
<reference key="1">
    <citation type="journal article" date="1997" name="Dev. Comp. Immunol.">
        <title>LPS (lipopolysaccharide)-activated immune responses in a hemocyte cell line from Estigmene acraea (Lepidoptera).</title>
        <authorList>
            <person name="Wittwer D."/>
            <person name="Weise C."/>
            <person name="Goetz P."/>
            <person name="Wiesner A."/>
        </authorList>
    </citation>
    <scope>PROTEIN SEQUENCE</scope>
    <scope>ACTIVITY REGULATION</scope>
    <source>
        <tissue>Hemocyte</tissue>
    </source>
</reference>
<name>LYS_ESTAC</name>
<accession>P82175</accession>
<evidence type="ECO:0000250" key="1"/>
<evidence type="ECO:0000269" key="2">
    <source>
    </source>
</evidence>
<evidence type="ECO:0000305" key="3"/>
<comment type="function">
    <text evidence="1">Lysozymes have primarily a bacteriolytic function; those in tissues and body fluids are associated with the monocyte-macrophage system and enhance the activity of immunoagents.</text>
</comment>
<comment type="catalytic activity">
    <reaction>
        <text>Hydrolysis of (1-&gt;4)-beta-linkages between N-acetylmuramic acid and N-acetyl-D-glucosamine residues in a peptidoglycan and between N-acetyl-D-glucosamine residues in chitodextrins.</text>
        <dbReference type="EC" id="3.2.1.17"/>
    </reaction>
</comment>
<comment type="activity regulation">
    <text evidence="2">By lipopolysaccharide (LPS).</text>
</comment>
<comment type="similarity">
    <text evidence="3">Belongs to the glycosyl hydrolase 22 family.</text>
</comment>
<sequence length="18" mass="2214">KYFATRCDLVRELRKXGF</sequence>
<feature type="chain" id="PRO_0000208878" description="Lysozyme">
    <location>
        <begin position="1"/>
        <end position="18" status="greater than"/>
    </location>
</feature>
<feature type="non-terminal residue">
    <location>
        <position position="18"/>
    </location>
</feature>
<proteinExistence type="evidence at protein level"/>